<accession>B2HL15</accession>
<feature type="chain" id="PRO_0000377228" description="tRNA dimethylallyltransferase 2">
    <location>
        <begin position="1"/>
        <end position="314"/>
    </location>
</feature>
<feature type="binding site" evidence="1">
    <location>
        <begin position="8"/>
        <end position="15"/>
    </location>
    <ligand>
        <name>ATP</name>
        <dbReference type="ChEBI" id="CHEBI:30616"/>
    </ligand>
</feature>
<feature type="binding site" evidence="1">
    <location>
        <begin position="10"/>
        <end position="15"/>
    </location>
    <ligand>
        <name>substrate</name>
    </ligand>
</feature>
<feature type="site" description="Interaction with substrate tRNA" evidence="1">
    <location>
        <position position="103"/>
    </location>
</feature>
<feature type="site" description="Interaction with substrate tRNA" evidence="1">
    <location>
        <position position="124"/>
    </location>
</feature>
<protein>
    <recommendedName>
        <fullName evidence="1">tRNA dimethylallyltransferase 2</fullName>
        <ecNumber evidence="1">2.5.1.75</ecNumber>
    </recommendedName>
    <alternativeName>
        <fullName evidence="1">Dimethylallyl diphosphate:tRNA dimethylallyltransferase 2</fullName>
        <shortName evidence="1">DMAPP:tRNA dimethylallyltransferase 2</shortName>
        <shortName evidence="1">DMATase 2</shortName>
    </alternativeName>
    <alternativeName>
        <fullName evidence="1">Isopentenyl-diphosphate:tRNA isopentenyltransferase 2</fullName>
        <shortName evidence="1">IPP transferase 2</shortName>
        <shortName evidence="1">IPPT 2</shortName>
        <shortName evidence="1">IPTase 2</shortName>
    </alternativeName>
</protein>
<keyword id="KW-0067">ATP-binding</keyword>
<keyword id="KW-0460">Magnesium</keyword>
<keyword id="KW-0547">Nucleotide-binding</keyword>
<keyword id="KW-1185">Reference proteome</keyword>
<keyword id="KW-0808">Transferase</keyword>
<keyword id="KW-0819">tRNA processing</keyword>
<sequence>MRPLAIIGPTGSGKSQLALDVAERLAGEVPAEIVNADAMQLYRGMDIGTAKLSVAARRGIPHHQLDVLNVAETATVARYQQAAAADIEAIIARGHVPIVVGGSMLYVQSLLDNWSFPATDPAVRARWEECLAELGVGELHAELARRDPAAAATILPTDGRRIVRALEVIELTGQPFAASAPRIGAAQWGTAIIGLDCDTPILDDRLAVRTDSMFERGLVEEVRVLLRAGLRDGVTAARALGYAQVLAALDAGGGAELLDDAREQTYFGTRRYVRRQRSWFRRDHRVHWCDAGATGPSDRAAMVDEALRVWRHVT</sequence>
<organism>
    <name type="scientific">Mycobacterium marinum (strain ATCC BAA-535 / M)</name>
    <dbReference type="NCBI Taxonomy" id="216594"/>
    <lineage>
        <taxon>Bacteria</taxon>
        <taxon>Bacillati</taxon>
        <taxon>Actinomycetota</taxon>
        <taxon>Actinomycetes</taxon>
        <taxon>Mycobacteriales</taxon>
        <taxon>Mycobacteriaceae</taxon>
        <taxon>Mycobacterium</taxon>
        <taxon>Mycobacterium ulcerans group</taxon>
    </lineage>
</organism>
<reference key="1">
    <citation type="journal article" date="2008" name="Genome Res.">
        <title>Insights from the complete genome sequence of Mycobacterium marinum on the evolution of Mycobacterium tuberculosis.</title>
        <authorList>
            <person name="Stinear T.P."/>
            <person name="Seemann T."/>
            <person name="Harrison P.F."/>
            <person name="Jenkin G.A."/>
            <person name="Davies J.K."/>
            <person name="Johnson P.D."/>
            <person name="Abdellah Z."/>
            <person name="Arrowsmith C."/>
            <person name="Chillingworth T."/>
            <person name="Churcher C."/>
            <person name="Clarke K."/>
            <person name="Cronin A."/>
            <person name="Davis P."/>
            <person name="Goodhead I."/>
            <person name="Holroyd N."/>
            <person name="Jagels K."/>
            <person name="Lord A."/>
            <person name="Moule S."/>
            <person name="Mungall K."/>
            <person name="Norbertczak H."/>
            <person name="Quail M.A."/>
            <person name="Rabbinowitsch E."/>
            <person name="Walker D."/>
            <person name="White B."/>
            <person name="Whitehead S."/>
            <person name="Small P.L."/>
            <person name="Brosch R."/>
            <person name="Ramakrishnan L."/>
            <person name="Fischbach M.A."/>
            <person name="Parkhill J."/>
            <person name="Cole S.T."/>
        </authorList>
    </citation>
    <scope>NUCLEOTIDE SEQUENCE [LARGE SCALE GENOMIC DNA]</scope>
    <source>
        <strain>ATCC BAA-535 / M</strain>
    </source>
</reference>
<proteinExistence type="inferred from homology"/>
<name>MIAA2_MYCMM</name>
<gene>
    <name evidence="1" type="primary">miaA2</name>
    <name type="ordered locus">MMAR_1986</name>
</gene>
<dbReference type="EC" id="2.5.1.75" evidence="1"/>
<dbReference type="EMBL" id="CP000854">
    <property type="protein sequence ID" value="ACC40436.1"/>
    <property type="molecule type" value="Genomic_DNA"/>
</dbReference>
<dbReference type="RefSeq" id="WP_012393771.1">
    <property type="nucleotide sequence ID" value="NC_010612.1"/>
</dbReference>
<dbReference type="SMR" id="B2HL15"/>
<dbReference type="STRING" id="216594.MMAR_1986"/>
<dbReference type="KEGG" id="mmi:MMAR_1986"/>
<dbReference type="eggNOG" id="COG0324">
    <property type="taxonomic scope" value="Bacteria"/>
</dbReference>
<dbReference type="HOGENOM" id="CLU_032616_0_1_11"/>
<dbReference type="OrthoDB" id="9776390at2"/>
<dbReference type="Proteomes" id="UP000001190">
    <property type="component" value="Chromosome"/>
</dbReference>
<dbReference type="GO" id="GO:0005524">
    <property type="term" value="F:ATP binding"/>
    <property type="evidence" value="ECO:0007669"/>
    <property type="project" value="UniProtKB-UniRule"/>
</dbReference>
<dbReference type="GO" id="GO:0052381">
    <property type="term" value="F:tRNA dimethylallyltransferase activity"/>
    <property type="evidence" value="ECO:0007669"/>
    <property type="project" value="UniProtKB-UniRule"/>
</dbReference>
<dbReference type="GO" id="GO:0006400">
    <property type="term" value="P:tRNA modification"/>
    <property type="evidence" value="ECO:0007669"/>
    <property type="project" value="TreeGrafter"/>
</dbReference>
<dbReference type="FunFam" id="1.10.20.140:FF:000001">
    <property type="entry name" value="tRNA dimethylallyltransferase"/>
    <property type="match status" value="1"/>
</dbReference>
<dbReference type="Gene3D" id="1.10.20.140">
    <property type="match status" value="1"/>
</dbReference>
<dbReference type="Gene3D" id="3.40.50.300">
    <property type="entry name" value="P-loop containing nucleotide triphosphate hydrolases"/>
    <property type="match status" value="1"/>
</dbReference>
<dbReference type="HAMAP" id="MF_00185">
    <property type="entry name" value="IPP_trans"/>
    <property type="match status" value="1"/>
</dbReference>
<dbReference type="InterPro" id="IPR039657">
    <property type="entry name" value="Dimethylallyltransferase"/>
</dbReference>
<dbReference type="InterPro" id="IPR018022">
    <property type="entry name" value="IPT"/>
</dbReference>
<dbReference type="InterPro" id="IPR027417">
    <property type="entry name" value="P-loop_NTPase"/>
</dbReference>
<dbReference type="NCBIfam" id="TIGR00174">
    <property type="entry name" value="miaA"/>
    <property type="match status" value="1"/>
</dbReference>
<dbReference type="PANTHER" id="PTHR11088">
    <property type="entry name" value="TRNA DIMETHYLALLYLTRANSFERASE"/>
    <property type="match status" value="1"/>
</dbReference>
<dbReference type="PANTHER" id="PTHR11088:SF60">
    <property type="entry name" value="TRNA DIMETHYLALLYLTRANSFERASE"/>
    <property type="match status" value="1"/>
</dbReference>
<dbReference type="Pfam" id="PF01715">
    <property type="entry name" value="IPPT"/>
    <property type="match status" value="1"/>
</dbReference>
<dbReference type="SUPFAM" id="SSF52540">
    <property type="entry name" value="P-loop containing nucleoside triphosphate hydrolases"/>
    <property type="match status" value="1"/>
</dbReference>
<comment type="function">
    <text evidence="1">Catalyzes the transfer of a dimethylallyl group onto the adenine at position 37 in tRNAs that read codons beginning with uridine, leading to the formation of N6-(dimethylallyl)adenosine (i(6)A).</text>
</comment>
<comment type="catalytic activity">
    <reaction evidence="1">
        <text>adenosine(37) in tRNA + dimethylallyl diphosphate = N(6)-dimethylallyladenosine(37) in tRNA + diphosphate</text>
        <dbReference type="Rhea" id="RHEA:26482"/>
        <dbReference type="Rhea" id="RHEA-COMP:10162"/>
        <dbReference type="Rhea" id="RHEA-COMP:10375"/>
        <dbReference type="ChEBI" id="CHEBI:33019"/>
        <dbReference type="ChEBI" id="CHEBI:57623"/>
        <dbReference type="ChEBI" id="CHEBI:74411"/>
        <dbReference type="ChEBI" id="CHEBI:74415"/>
        <dbReference type="EC" id="2.5.1.75"/>
    </reaction>
</comment>
<comment type="cofactor">
    <cofactor evidence="1">
        <name>Mg(2+)</name>
        <dbReference type="ChEBI" id="CHEBI:18420"/>
    </cofactor>
</comment>
<comment type="subunit">
    <text evidence="1">Monomer.</text>
</comment>
<comment type="similarity">
    <text evidence="1">Belongs to the IPP transferase family.</text>
</comment>
<evidence type="ECO:0000255" key="1">
    <source>
        <dbReference type="HAMAP-Rule" id="MF_00185"/>
    </source>
</evidence>